<organism>
    <name type="scientific">Vibrio atlanticus (strain LGP32)</name>
    <name type="common">Vibrio splendidus (strain Mel32)</name>
    <dbReference type="NCBI Taxonomy" id="575788"/>
    <lineage>
        <taxon>Bacteria</taxon>
        <taxon>Pseudomonadati</taxon>
        <taxon>Pseudomonadota</taxon>
        <taxon>Gammaproteobacteria</taxon>
        <taxon>Vibrionales</taxon>
        <taxon>Vibrionaceae</taxon>
        <taxon>Vibrio</taxon>
    </lineage>
</organism>
<sequence>MGRIIGIDLGTTNSCVAVLDGDKPRVLENAEGERTTASVIAYTEGETLVGQPAKRQAVTNPQNTLYAIKRLIGRRFEDEEVQRDIEIMPFNIVKADNGDAWVEAQGQKMAAPQVSAEVLKKMKKTAEDFLGEEVTGAVVTVPAYFNDAQRQATKDAGRIAGLDVKRIINEPTAAALAYGLDKQGGDRTIAVYDLGGGTFDISIIEIDEVEGEKTFEVLSTNGDTHLGGEDFDNRMINYLVDEFKKEQGIDLKADPLAMQRVKEAAEKAKIELSSTTQTDVNLPYVTADATGPKHMNIKVTRAKLESLVEDLVQRSLEPLKVALADADLSVGEITDVILVGGQTRMPMVQAKVTEFFGKEPRKDVNPDEAVAMGAAVQGGVLAGEVKDVLLLDVTPLSFGIETMGGVMTKLIEKNTTIPTKADQVFSTAEDNQSAVTIHVLQGERKQATYNKSLGQFNLEGIQPAPRGMPQVEVTFDLDADGILNVSAKDKATGKEQKITIQASGGLSEEEIEAMVQEAEANKEADKKFEELVTARNQADQMIHGTKKQVEEAGEALPADEKAKIEAAIEALESVKSGDDKEAIDAKVQELMQAAQKLMEIAQQKAQAEQAGADAGEQPKQDDDVVDAEFEEVKEDKK</sequence>
<protein>
    <recommendedName>
        <fullName evidence="1">Chaperone protein DnaK</fullName>
    </recommendedName>
    <alternativeName>
        <fullName evidence="1">HSP70</fullName>
    </alternativeName>
    <alternativeName>
        <fullName evidence="1">Heat shock 70 kDa protein</fullName>
    </alternativeName>
    <alternativeName>
        <fullName evidence="1">Heat shock protein 70</fullName>
    </alternativeName>
</protein>
<accession>B7VJW9</accession>
<dbReference type="EMBL" id="FM954972">
    <property type="protein sequence ID" value="CAV17645.1"/>
    <property type="molecule type" value="Genomic_DNA"/>
</dbReference>
<dbReference type="SMR" id="B7VJW9"/>
<dbReference type="STRING" id="575788.VS_0651"/>
<dbReference type="KEGG" id="vsp:VS_0651"/>
<dbReference type="eggNOG" id="COG0443">
    <property type="taxonomic scope" value="Bacteria"/>
</dbReference>
<dbReference type="HOGENOM" id="CLU_005965_2_1_6"/>
<dbReference type="Proteomes" id="UP000009100">
    <property type="component" value="Chromosome 1"/>
</dbReference>
<dbReference type="GO" id="GO:0005524">
    <property type="term" value="F:ATP binding"/>
    <property type="evidence" value="ECO:0007669"/>
    <property type="project" value="UniProtKB-UniRule"/>
</dbReference>
<dbReference type="GO" id="GO:0140662">
    <property type="term" value="F:ATP-dependent protein folding chaperone"/>
    <property type="evidence" value="ECO:0007669"/>
    <property type="project" value="InterPro"/>
</dbReference>
<dbReference type="GO" id="GO:0051082">
    <property type="term" value="F:unfolded protein binding"/>
    <property type="evidence" value="ECO:0007669"/>
    <property type="project" value="InterPro"/>
</dbReference>
<dbReference type="CDD" id="cd10234">
    <property type="entry name" value="ASKHA_NBD_HSP70_DnaK-like"/>
    <property type="match status" value="1"/>
</dbReference>
<dbReference type="FunFam" id="2.60.34.10:FF:000014">
    <property type="entry name" value="Chaperone protein DnaK HSP70"/>
    <property type="match status" value="1"/>
</dbReference>
<dbReference type="FunFam" id="1.20.1270.10:FF:000001">
    <property type="entry name" value="Molecular chaperone DnaK"/>
    <property type="match status" value="1"/>
</dbReference>
<dbReference type="FunFam" id="3.30.420.40:FF:000004">
    <property type="entry name" value="Molecular chaperone DnaK"/>
    <property type="match status" value="1"/>
</dbReference>
<dbReference type="FunFam" id="3.90.640.10:FF:000003">
    <property type="entry name" value="Molecular chaperone DnaK"/>
    <property type="match status" value="1"/>
</dbReference>
<dbReference type="Gene3D" id="1.20.1270.10">
    <property type="match status" value="1"/>
</dbReference>
<dbReference type="Gene3D" id="3.30.420.40">
    <property type="match status" value="2"/>
</dbReference>
<dbReference type="Gene3D" id="3.90.640.10">
    <property type="entry name" value="Actin, Chain A, domain 4"/>
    <property type="match status" value="1"/>
</dbReference>
<dbReference type="Gene3D" id="2.60.34.10">
    <property type="entry name" value="Substrate Binding Domain Of DNAk, Chain A, domain 1"/>
    <property type="match status" value="1"/>
</dbReference>
<dbReference type="HAMAP" id="MF_00332">
    <property type="entry name" value="DnaK"/>
    <property type="match status" value="1"/>
</dbReference>
<dbReference type="InterPro" id="IPR043129">
    <property type="entry name" value="ATPase_NBD"/>
</dbReference>
<dbReference type="InterPro" id="IPR012725">
    <property type="entry name" value="Chaperone_DnaK"/>
</dbReference>
<dbReference type="InterPro" id="IPR018181">
    <property type="entry name" value="Heat_shock_70_CS"/>
</dbReference>
<dbReference type="InterPro" id="IPR029048">
    <property type="entry name" value="HSP70_C_sf"/>
</dbReference>
<dbReference type="InterPro" id="IPR029047">
    <property type="entry name" value="HSP70_peptide-bd_sf"/>
</dbReference>
<dbReference type="InterPro" id="IPR013126">
    <property type="entry name" value="Hsp_70_fam"/>
</dbReference>
<dbReference type="NCBIfam" id="NF001413">
    <property type="entry name" value="PRK00290.1"/>
    <property type="match status" value="1"/>
</dbReference>
<dbReference type="NCBIfam" id="TIGR02350">
    <property type="entry name" value="prok_dnaK"/>
    <property type="match status" value="1"/>
</dbReference>
<dbReference type="PANTHER" id="PTHR19375">
    <property type="entry name" value="HEAT SHOCK PROTEIN 70KDA"/>
    <property type="match status" value="1"/>
</dbReference>
<dbReference type="Pfam" id="PF00012">
    <property type="entry name" value="HSP70"/>
    <property type="match status" value="1"/>
</dbReference>
<dbReference type="PRINTS" id="PR00301">
    <property type="entry name" value="HEATSHOCK70"/>
</dbReference>
<dbReference type="SUPFAM" id="SSF53067">
    <property type="entry name" value="Actin-like ATPase domain"/>
    <property type="match status" value="2"/>
</dbReference>
<dbReference type="SUPFAM" id="SSF100934">
    <property type="entry name" value="Heat shock protein 70kD (HSP70), C-terminal subdomain"/>
    <property type="match status" value="1"/>
</dbReference>
<dbReference type="SUPFAM" id="SSF100920">
    <property type="entry name" value="Heat shock protein 70kD (HSP70), peptide-binding domain"/>
    <property type="match status" value="1"/>
</dbReference>
<dbReference type="PROSITE" id="PS00297">
    <property type="entry name" value="HSP70_1"/>
    <property type="match status" value="1"/>
</dbReference>
<dbReference type="PROSITE" id="PS00329">
    <property type="entry name" value="HSP70_2"/>
    <property type="match status" value="1"/>
</dbReference>
<dbReference type="PROSITE" id="PS01036">
    <property type="entry name" value="HSP70_3"/>
    <property type="match status" value="1"/>
</dbReference>
<gene>
    <name evidence="1" type="primary">dnaK</name>
    <name type="ordered locus">VS_0651</name>
</gene>
<name>DNAK_VIBA3</name>
<reference key="1">
    <citation type="submission" date="2009-02" db="EMBL/GenBank/DDBJ databases">
        <title>Vibrio splendidus str. LGP32 complete genome.</title>
        <authorList>
            <person name="Mazel D."/>
            <person name="Le Roux F."/>
        </authorList>
    </citation>
    <scope>NUCLEOTIDE SEQUENCE [LARGE SCALE GENOMIC DNA]</scope>
    <source>
        <strain>LGP32</strain>
    </source>
</reference>
<comment type="function">
    <text evidence="1">Acts as a chaperone.</text>
</comment>
<comment type="induction">
    <text evidence="1">By stress conditions e.g. heat shock.</text>
</comment>
<comment type="similarity">
    <text evidence="1">Belongs to the heat shock protein 70 family.</text>
</comment>
<proteinExistence type="inferred from homology"/>
<evidence type="ECO:0000255" key="1">
    <source>
        <dbReference type="HAMAP-Rule" id="MF_00332"/>
    </source>
</evidence>
<evidence type="ECO:0000256" key="2">
    <source>
        <dbReference type="SAM" id="MobiDB-lite"/>
    </source>
</evidence>
<feature type="chain" id="PRO_1000133171" description="Chaperone protein DnaK">
    <location>
        <begin position="1"/>
        <end position="637"/>
    </location>
</feature>
<feature type="region of interest" description="Disordered" evidence="2">
    <location>
        <begin position="601"/>
        <end position="637"/>
    </location>
</feature>
<feature type="compositionally biased region" description="Low complexity" evidence="2">
    <location>
        <begin position="601"/>
        <end position="615"/>
    </location>
</feature>
<feature type="compositionally biased region" description="Acidic residues" evidence="2">
    <location>
        <begin position="623"/>
        <end position="637"/>
    </location>
</feature>
<feature type="modified residue" description="Phosphothreonine; by autocatalysis" evidence="1">
    <location>
        <position position="198"/>
    </location>
</feature>
<keyword id="KW-0067">ATP-binding</keyword>
<keyword id="KW-0143">Chaperone</keyword>
<keyword id="KW-0547">Nucleotide-binding</keyword>
<keyword id="KW-0597">Phosphoprotein</keyword>
<keyword id="KW-0346">Stress response</keyword>